<evidence type="ECO:0000250" key="1">
    <source>
        <dbReference type="UniProtKB" id="P0A988"/>
    </source>
</evidence>
<evidence type="ECO:0000305" key="2"/>
<keyword id="KW-0963">Cytoplasm</keyword>
<keyword id="KW-0235">DNA replication</keyword>
<keyword id="KW-0238">DNA-binding</keyword>
<keyword id="KW-0239">DNA-directed DNA polymerase</keyword>
<keyword id="KW-0548">Nucleotidyltransferase</keyword>
<keyword id="KW-1185">Reference proteome</keyword>
<keyword id="KW-0808">Transferase</keyword>
<comment type="function">
    <text evidence="1">Confers DNA tethering and processivity to DNA polymerases and other proteins. Acts as a clamp, forming a ring around DNA (a reaction catalyzed by the clamp-loading complex) which diffuses in an ATP-independent manner freely and bidirectionally along dsDNA. Initially characterized for its ability to contact the catalytic subunit of DNA polymerase III (Pol III), a complex, multichain enzyme responsible for most of the replicative synthesis in bacteria; Pol III exhibits 3'-5' exonuclease proofreading activity. The beta chain is required for initiation of replication as well as for processivity of DNA replication.</text>
</comment>
<comment type="subunit">
    <text evidence="1">Forms a ring-shaped head-to-tail homodimer around DNA which binds and tethers DNA polymerases and other proteins to the DNA. The DNA replisome complex has a single clamp-loading complex (3 tau and 1 each of delta, delta', psi and chi subunits) which binds 3 Pol III cores (1 core on the leading strand and 2 on the lagging strand) each with a beta sliding clamp dimer. Additional proteins in the replisome are other copies of gamma, psi and chi, Ssb, DNA helicase and RNA primase.</text>
</comment>
<comment type="subcellular location">
    <subcellularLocation>
        <location evidence="1">Cytoplasm</location>
    </subcellularLocation>
</comment>
<comment type="similarity">
    <text evidence="2">Belongs to the beta sliding clamp family.</text>
</comment>
<proteinExistence type="inferred from homology"/>
<accession>O83048</accession>
<name>DPO3B_TREPA</name>
<reference key="1">
    <citation type="journal article" date="1998" name="Science">
        <title>Complete genome sequence of Treponema pallidum, the syphilis spirochete.</title>
        <authorList>
            <person name="Fraser C.M."/>
            <person name="Norris S.J."/>
            <person name="Weinstock G.M."/>
            <person name="White O."/>
            <person name="Sutton G.G."/>
            <person name="Dodson R.J."/>
            <person name="Gwinn M.L."/>
            <person name="Hickey E.K."/>
            <person name="Clayton R.A."/>
            <person name="Ketchum K.A."/>
            <person name="Sodergren E."/>
            <person name="Hardham J.M."/>
            <person name="McLeod M.P."/>
            <person name="Salzberg S.L."/>
            <person name="Peterson J.D."/>
            <person name="Khalak H.G."/>
            <person name="Richardson D.L."/>
            <person name="Howell J.K."/>
            <person name="Chidambaram M."/>
            <person name="Utterback T.R."/>
            <person name="McDonald L.A."/>
            <person name="Artiach P."/>
            <person name="Bowman C."/>
            <person name="Cotton M.D."/>
            <person name="Fujii C."/>
            <person name="Garland S.A."/>
            <person name="Hatch B."/>
            <person name="Horst K."/>
            <person name="Roberts K.M."/>
            <person name="Sandusky M."/>
            <person name="Weidman J.F."/>
            <person name="Smith H.O."/>
            <person name="Venter J.C."/>
        </authorList>
    </citation>
    <scope>NUCLEOTIDE SEQUENCE [LARGE SCALE GENOMIC DNA]</scope>
    <source>
        <strain>Nichols</strain>
    </source>
</reference>
<organism>
    <name type="scientific">Treponema pallidum (strain Nichols)</name>
    <dbReference type="NCBI Taxonomy" id="243276"/>
    <lineage>
        <taxon>Bacteria</taxon>
        <taxon>Pseudomonadati</taxon>
        <taxon>Spirochaetota</taxon>
        <taxon>Spirochaetia</taxon>
        <taxon>Spirochaetales</taxon>
        <taxon>Treponemataceae</taxon>
        <taxon>Treponema</taxon>
    </lineage>
</organism>
<sequence length="371" mass="41290">MKILCEKEAFLKEISTAQEVISNKKNTSIFSNVLLAAQGALLTIRATDTKVTFETSIPVNVLAEGTTTVFCDKLVNVVSALPTKEIELTLCEEQLVITPPNKKISFQLRTLSHESFPCFPQNEGGVSLAVPTSDLRNMINHTVFAVSEDSTRHFINGVHVDFQYGNIICVSTDGKRLAYIEKKGESSPQSFSGVIVPTKILGIVNRKLTPEGSVTLCITSQHVYFFFGGYKFSSVLIEGQFPNYKRVIPDHQERSFCVGRVELMEALKRVSLLVEQKSHRIFITIQQGLLTLSSKAHTQENEIGDAQEEIACAYTGESEVIALNYLYLEEPLKVFTSKEVQVEFTDPAKALTLRAVPNTDCFHIIMPMQTE</sequence>
<protein>
    <recommendedName>
        <fullName>Beta sliding clamp</fullName>
        <shortName>Beta clamp</shortName>
        <shortName>Sliding clamp</shortName>
    </recommendedName>
    <alternativeName>
        <fullName>Beta-clamp processivity factor</fullName>
    </alternativeName>
    <alternativeName>
        <fullName>DNA polymerase III beta sliding clamp subunit</fullName>
    </alternativeName>
    <alternativeName>
        <fullName>DNA polymerase III subunit beta</fullName>
    </alternativeName>
</protein>
<gene>
    <name type="primary">dnaN</name>
    <name type="ordered locus">TP_0002</name>
</gene>
<feature type="chain" id="PRO_0000105476" description="Beta sliding clamp">
    <location>
        <begin position="1"/>
        <end position="371"/>
    </location>
</feature>
<dbReference type="EMBL" id="AE000520">
    <property type="protein sequence ID" value="AAC65000.1"/>
    <property type="molecule type" value="Genomic_DNA"/>
</dbReference>
<dbReference type="PIR" id="A71378">
    <property type="entry name" value="A71378"/>
</dbReference>
<dbReference type="RefSeq" id="WP_010881452.1">
    <property type="nucleotide sequence ID" value="NC_021490.2"/>
</dbReference>
<dbReference type="SMR" id="O83048"/>
<dbReference type="IntAct" id="O83048">
    <property type="interactions" value="4"/>
</dbReference>
<dbReference type="STRING" id="243276.TP_0002"/>
<dbReference type="EnsemblBacteria" id="AAC65000">
    <property type="protein sequence ID" value="AAC65000"/>
    <property type="gene ID" value="TP_0002"/>
</dbReference>
<dbReference type="GeneID" id="93875802"/>
<dbReference type="KEGG" id="tpa:TP_0002"/>
<dbReference type="KEGG" id="tpw:TPANIC_0002"/>
<dbReference type="eggNOG" id="COG0592">
    <property type="taxonomic scope" value="Bacteria"/>
</dbReference>
<dbReference type="HOGENOM" id="CLU_038149_4_2_12"/>
<dbReference type="OrthoDB" id="8421503at2"/>
<dbReference type="Proteomes" id="UP000000811">
    <property type="component" value="Chromosome"/>
</dbReference>
<dbReference type="GO" id="GO:0005737">
    <property type="term" value="C:cytoplasm"/>
    <property type="evidence" value="ECO:0007669"/>
    <property type="project" value="UniProtKB-SubCell"/>
</dbReference>
<dbReference type="GO" id="GO:0009360">
    <property type="term" value="C:DNA polymerase III complex"/>
    <property type="evidence" value="ECO:0007669"/>
    <property type="project" value="InterPro"/>
</dbReference>
<dbReference type="GO" id="GO:0008408">
    <property type="term" value="F:3'-5' exonuclease activity"/>
    <property type="evidence" value="ECO:0007669"/>
    <property type="project" value="InterPro"/>
</dbReference>
<dbReference type="GO" id="GO:0003677">
    <property type="term" value="F:DNA binding"/>
    <property type="evidence" value="ECO:0007669"/>
    <property type="project" value="UniProtKB-KW"/>
</dbReference>
<dbReference type="GO" id="GO:0003887">
    <property type="term" value="F:DNA-directed DNA polymerase activity"/>
    <property type="evidence" value="ECO:0007669"/>
    <property type="project" value="UniProtKB-KW"/>
</dbReference>
<dbReference type="GO" id="GO:0006271">
    <property type="term" value="P:DNA strand elongation involved in DNA replication"/>
    <property type="evidence" value="ECO:0007669"/>
    <property type="project" value="TreeGrafter"/>
</dbReference>
<dbReference type="CDD" id="cd00140">
    <property type="entry name" value="beta_clamp"/>
    <property type="match status" value="1"/>
</dbReference>
<dbReference type="Gene3D" id="3.70.10.10">
    <property type="match status" value="1"/>
</dbReference>
<dbReference type="Gene3D" id="3.10.150.10">
    <property type="entry name" value="DNA Polymerase III, subunit A, domain 2"/>
    <property type="match status" value="1"/>
</dbReference>
<dbReference type="InterPro" id="IPR046938">
    <property type="entry name" value="DNA_clamp_sf"/>
</dbReference>
<dbReference type="InterPro" id="IPR001001">
    <property type="entry name" value="DNA_polIII_beta"/>
</dbReference>
<dbReference type="InterPro" id="IPR022635">
    <property type="entry name" value="DNA_polIII_beta_C"/>
</dbReference>
<dbReference type="InterPro" id="IPR022637">
    <property type="entry name" value="DNA_polIII_beta_cen"/>
</dbReference>
<dbReference type="InterPro" id="IPR022634">
    <property type="entry name" value="DNA_polIII_beta_N"/>
</dbReference>
<dbReference type="NCBIfam" id="TIGR00663">
    <property type="entry name" value="dnan"/>
    <property type="match status" value="1"/>
</dbReference>
<dbReference type="PANTHER" id="PTHR30478:SF0">
    <property type="entry name" value="BETA SLIDING CLAMP"/>
    <property type="match status" value="1"/>
</dbReference>
<dbReference type="PANTHER" id="PTHR30478">
    <property type="entry name" value="DNA POLYMERASE III SUBUNIT BETA"/>
    <property type="match status" value="1"/>
</dbReference>
<dbReference type="Pfam" id="PF00712">
    <property type="entry name" value="DNA_pol3_beta"/>
    <property type="match status" value="1"/>
</dbReference>
<dbReference type="Pfam" id="PF02767">
    <property type="entry name" value="DNA_pol3_beta_2"/>
    <property type="match status" value="1"/>
</dbReference>
<dbReference type="Pfam" id="PF02768">
    <property type="entry name" value="DNA_pol3_beta_3"/>
    <property type="match status" value="1"/>
</dbReference>
<dbReference type="PIRSF" id="PIRSF000804">
    <property type="entry name" value="DNA_pol_III_b"/>
    <property type="match status" value="1"/>
</dbReference>
<dbReference type="SMART" id="SM00480">
    <property type="entry name" value="POL3Bc"/>
    <property type="match status" value="1"/>
</dbReference>
<dbReference type="SUPFAM" id="SSF55979">
    <property type="entry name" value="DNA clamp"/>
    <property type="match status" value="3"/>
</dbReference>